<name>Y2790_YERE8</name>
<sequence length="135" mass="15146">MRNVTSLGWQYLRAFVIIYLCLWAGKAVTLLLPISIPGSILGMLILFALLSSQILPSTWVKPGCHLLIRYMALLFVPIGVGVMQYYDQLTKQFGPIVVSCFVSTLVVMLVVGYSSHYVHRERKVMGSPTHTEEDK</sequence>
<proteinExistence type="inferred from homology"/>
<comment type="subcellular location">
    <subcellularLocation>
        <location evidence="1">Cell inner membrane</location>
        <topology evidence="1">Multi-pass membrane protein</topology>
    </subcellularLocation>
</comment>
<comment type="similarity">
    <text evidence="1">Belongs to the UPF0299 family.</text>
</comment>
<protein>
    <recommendedName>
        <fullName evidence="1">UPF0299 membrane protein YE2790</fullName>
    </recommendedName>
</protein>
<gene>
    <name type="ordered locus">YE2790</name>
</gene>
<dbReference type="EMBL" id="AM286415">
    <property type="protein sequence ID" value="CAL12823.1"/>
    <property type="molecule type" value="Genomic_DNA"/>
</dbReference>
<dbReference type="RefSeq" id="WP_011816723.1">
    <property type="nucleotide sequence ID" value="NC_008800.1"/>
</dbReference>
<dbReference type="RefSeq" id="YP_001006980.1">
    <property type="nucleotide sequence ID" value="NC_008800.1"/>
</dbReference>
<dbReference type="SMR" id="A1JTY1"/>
<dbReference type="KEGG" id="yen:YE2790"/>
<dbReference type="PATRIC" id="fig|393305.7.peg.2964"/>
<dbReference type="eggNOG" id="COG1380">
    <property type="taxonomic scope" value="Bacteria"/>
</dbReference>
<dbReference type="HOGENOM" id="CLU_113736_1_1_6"/>
<dbReference type="OrthoDB" id="385012at2"/>
<dbReference type="Proteomes" id="UP000000642">
    <property type="component" value="Chromosome"/>
</dbReference>
<dbReference type="GO" id="GO:0005886">
    <property type="term" value="C:plasma membrane"/>
    <property type="evidence" value="ECO:0007669"/>
    <property type="project" value="UniProtKB-SubCell"/>
</dbReference>
<dbReference type="HAMAP" id="MF_01144">
    <property type="entry name" value="UPF0299"/>
    <property type="match status" value="1"/>
</dbReference>
<dbReference type="InterPro" id="IPR005538">
    <property type="entry name" value="LrgA/CidA"/>
</dbReference>
<dbReference type="InterPro" id="IPR022957">
    <property type="entry name" value="Uncharacterised_UPF0299"/>
</dbReference>
<dbReference type="NCBIfam" id="NF002494">
    <property type="entry name" value="PRK01821.1"/>
    <property type="match status" value="1"/>
</dbReference>
<dbReference type="PANTHER" id="PTHR33931">
    <property type="entry name" value="HOLIN-LIKE PROTEIN CIDA-RELATED"/>
    <property type="match status" value="1"/>
</dbReference>
<dbReference type="PANTHER" id="PTHR33931:SF5">
    <property type="entry name" value="UPF0299 MEMBRANE PROTEIN YOHJ"/>
    <property type="match status" value="1"/>
</dbReference>
<dbReference type="Pfam" id="PF03788">
    <property type="entry name" value="LrgA"/>
    <property type="match status" value="1"/>
</dbReference>
<accession>A1JTY1</accession>
<evidence type="ECO:0000255" key="1">
    <source>
        <dbReference type="HAMAP-Rule" id="MF_01144"/>
    </source>
</evidence>
<keyword id="KW-0997">Cell inner membrane</keyword>
<keyword id="KW-1003">Cell membrane</keyword>
<keyword id="KW-0472">Membrane</keyword>
<keyword id="KW-0812">Transmembrane</keyword>
<keyword id="KW-1133">Transmembrane helix</keyword>
<feature type="chain" id="PRO_1000065470" description="UPF0299 membrane protein YE2790">
    <location>
        <begin position="1"/>
        <end position="135"/>
    </location>
</feature>
<feature type="transmembrane region" description="Helical" evidence="1">
    <location>
        <begin position="4"/>
        <end position="24"/>
    </location>
</feature>
<feature type="transmembrane region" description="Helical" evidence="1">
    <location>
        <begin position="30"/>
        <end position="50"/>
    </location>
</feature>
<feature type="transmembrane region" description="Helical" evidence="1">
    <location>
        <begin position="63"/>
        <end position="83"/>
    </location>
</feature>
<feature type="transmembrane region" description="Helical" evidence="1">
    <location>
        <begin position="93"/>
        <end position="113"/>
    </location>
</feature>
<reference key="1">
    <citation type="journal article" date="2006" name="PLoS Genet.">
        <title>The complete genome sequence and comparative genome analysis of the high pathogenicity Yersinia enterocolitica strain 8081.</title>
        <authorList>
            <person name="Thomson N.R."/>
            <person name="Howard S."/>
            <person name="Wren B.W."/>
            <person name="Holden M.T.G."/>
            <person name="Crossman L."/>
            <person name="Challis G.L."/>
            <person name="Churcher C."/>
            <person name="Mungall K."/>
            <person name="Brooks K."/>
            <person name="Chillingworth T."/>
            <person name="Feltwell T."/>
            <person name="Abdellah Z."/>
            <person name="Hauser H."/>
            <person name="Jagels K."/>
            <person name="Maddison M."/>
            <person name="Moule S."/>
            <person name="Sanders M."/>
            <person name="Whitehead S."/>
            <person name="Quail M.A."/>
            <person name="Dougan G."/>
            <person name="Parkhill J."/>
            <person name="Prentice M.B."/>
        </authorList>
    </citation>
    <scope>NUCLEOTIDE SEQUENCE [LARGE SCALE GENOMIC DNA]</scope>
    <source>
        <strain>NCTC 13174 / 8081</strain>
    </source>
</reference>
<organism>
    <name type="scientific">Yersinia enterocolitica serotype O:8 / biotype 1B (strain NCTC 13174 / 8081)</name>
    <dbReference type="NCBI Taxonomy" id="393305"/>
    <lineage>
        <taxon>Bacteria</taxon>
        <taxon>Pseudomonadati</taxon>
        <taxon>Pseudomonadota</taxon>
        <taxon>Gammaproteobacteria</taxon>
        <taxon>Enterobacterales</taxon>
        <taxon>Yersiniaceae</taxon>
        <taxon>Yersinia</taxon>
    </lineage>
</organism>